<sequence>MSILSSLISISNPMKSSKSSVANGGGSSLSMGSNSIACGSCGSNGGNGRKRLPSDYTNIDSNAGSYTTASGSTYSYSYSYGYYSGSCGCN</sequence>
<proteinExistence type="inferred from homology"/>
<gene>
    <name type="primary">hssl4</name>
    <name type="ORF">DDB_G0268170</name>
</gene>
<name>HSL4_DICDI</name>
<organism>
    <name type="scientific">Dictyostelium discoideum</name>
    <name type="common">Social amoeba</name>
    <dbReference type="NCBI Taxonomy" id="44689"/>
    <lineage>
        <taxon>Eukaryota</taxon>
        <taxon>Amoebozoa</taxon>
        <taxon>Evosea</taxon>
        <taxon>Eumycetozoa</taxon>
        <taxon>Dictyostelia</taxon>
        <taxon>Dictyosteliales</taxon>
        <taxon>Dictyosteliaceae</taxon>
        <taxon>Dictyostelium</taxon>
    </lineage>
</organism>
<evidence type="ECO:0000305" key="1"/>
<accession>Q55FC7</accession>
<protein>
    <recommendedName>
        <fullName>HssA/B-like protein 4</fullName>
    </recommendedName>
</protein>
<dbReference type="EMBL" id="AAFI02000003">
    <property type="protein sequence ID" value="EAL73538.1"/>
    <property type="molecule type" value="Genomic_DNA"/>
</dbReference>
<dbReference type="RefSeq" id="XP_647606.1">
    <property type="nucleotide sequence ID" value="XM_642514.1"/>
</dbReference>
<dbReference type="FunCoup" id="Q55FC7">
    <property type="interactions" value="108"/>
</dbReference>
<dbReference type="PaxDb" id="44689-DDB0252796"/>
<dbReference type="EnsemblProtists" id="EAL73538">
    <property type="protein sequence ID" value="EAL73538"/>
    <property type="gene ID" value="DDB_G0268170"/>
</dbReference>
<dbReference type="GeneID" id="8616418"/>
<dbReference type="KEGG" id="ddi:DDB_G0268170"/>
<dbReference type="dictyBase" id="DDB_G0268170"/>
<dbReference type="HOGENOM" id="CLU_181850_1_0_1"/>
<dbReference type="InParanoid" id="Q55FC7"/>
<dbReference type="PRO" id="PR:Q55FC7"/>
<dbReference type="Proteomes" id="UP000002195">
    <property type="component" value="Chromosome 1"/>
</dbReference>
<dbReference type="GO" id="GO:0030587">
    <property type="term" value="P:sorocarp development"/>
    <property type="evidence" value="ECO:0000318"/>
    <property type="project" value="GO_Central"/>
</dbReference>
<dbReference type="InterPro" id="IPR050533">
    <property type="entry name" value="HssA/B-like_chaperone"/>
</dbReference>
<dbReference type="InterPro" id="IPR008455">
    <property type="entry name" value="HssA/B-related"/>
</dbReference>
<dbReference type="PANTHER" id="PTHR31059">
    <property type="entry name" value="HSSA/B-LIKE PROTEIN 1-RELATED-RELATED"/>
    <property type="match status" value="1"/>
</dbReference>
<dbReference type="PANTHER" id="PTHR31059:SF5">
    <property type="entry name" value="HSSA_B-LIKE PROTEIN 1-RELATED"/>
    <property type="match status" value="1"/>
</dbReference>
<dbReference type="Pfam" id="PF05710">
    <property type="entry name" value="Coiled"/>
    <property type="match status" value="1"/>
</dbReference>
<keyword id="KW-1185">Reference proteome</keyword>
<comment type="similarity">
    <text evidence="1">Belongs to the hssA/B family.</text>
</comment>
<reference key="1">
    <citation type="journal article" date="2005" name="Nature">
        <title>The genome of the social amoeba Dictyostelium discoideum.</title>
        <authorList>
            <person name="Eichinger L."/>
            <person name="Pachebat J.A."/>
            <person name="Gloeckner G."/>
            <person name="Rajandream M.A."/>
            <person name="Sucgang R."/>
            <person name="Berriman M."/>
            <person name="Song J."/>
            <person name="Olsen R."/>
            <person name="Szafranski K."/>
            <person name="Xu Q."/>
            <person name="Tunggal B."/>
            <person name="Kummerfeld S."/>
            <person name="Madera M."/>
            <person name="Konfortov B.A."/>
            <person name="Rivero F."/>
            <person name="Bankier A.T."/>
            <person name="Lehmann R."/>
            <person name="Hamlin N."/>
            <person name="Davies R."/>
            <person name="Gaudet P."/>
            <person name="Fey P."/>
            <person name="Pilcher K."/>
            <person name="Chen G."/>
            <person name="Saunders D."/>
            <person name="Sodergren E.J."/>
            <person name="Davis P."/>
            <person name="Kerhornou A."/>
            <person name="Nie X."/>
            <person name="Hall N."/>
            <person name="Anjard C."/>
            <person name="Hemphill L."/>
            <person name="Bason N."/>
            <person name="Farbrother P."/>
            <person name="Desany B."/>
            <person name="Just E."/>
            <person name="Morio T."/>
            <person name="Rost R."/>
            <person name="Churcher C.M."/>
            <person name="Cooper J."/>
            <person name="Haydock S."/>
            <person name="van Driessche N."/>
            <person name="Cronin A."/>
            <person name="Goodhead I."/>
            <person name="Muzny D.M."/>
            <person name="Mourier T."/>
            <person name="Pain A."/>
            <person name="Lu M."/>
            <person name="Harper D."/>
            <person name="Lindsay R."/>
            <person name="Hauser H."/>
            <person name="James K.D."/>
            <person name="Quiles M."/>
            <person name="Madan Babu M."/>
            <person name="Saito T."/>
            <person name="Buchrieser C."/>
            <person name="Wardroper A."/>
            <person name="Felder M."/>
            <person name="Thangavelu M."/>
            <person name="Johnson D."/>
            <person name="Knights A."/>
            <person name="Loulseged H."/>
            <person name="Mungall K.L."/>
            <person name="Oliver K."/>
            <person name="Price C."/>
            <person name="Quail M.A."/>
            <person name="Urushihara H."/>
            <person name="Hernandez J."/>
            <person name="Rabbinowitsch E."/>
            <person name="Steffen D."/>
            <person name="Sanders M."/>
            <person name="Ma J."/>
            <person name="Kohara Y."/>
            <person name="Sharp S."/>
            <person name="Simmonds M.N."/>
            <person name="Spiegler S."/>
            <person name="Tivey A."/>
            <person name="Sugano S."/>
            <person name="White B."/>
            <person name="Walker D."/>
            <person name="Woodward J.R."/>
            <person name="Winckler T."/>
            <person name="Tanaka Y."/>
            <person name="Shaulsky G."/>
            <person name="Schleicher M."/>
            <person name="Weinstock G.M."/>
            <person name="Rosenthal A."/>
            <person name="Cox E.C."/>
            <person name="Chisholm R.L."/>
            <person name="Gibbs R.A."/>
            <person name="Loomis W.F."/>
            <person name="Platzer M."/>
            <person name="Kay R.R."/>
            <person name="Williams J.G."/>
            <person name="Dear P.H."/>
            <person name="Noegel A.A."/>
            <person name="Barrell B.G."/>
            <person name="Kuspa A."/>
        </authorList>
    </citation>
    <scope>NUCLEOTIDE SEQUENCE [LARGE SCALE GENOMIC DNA]</scope>
    <source>
        <strain>AX4</strain>
    </source>
</reference>
<feature type="chain" id="PRO_0000330374" description="HssA/B-like protein 4">
    <location>
        <begin position="1"/>
        <end position="90"/>
    </location>
</feature>